<evidence type="ECO:0000255" key="1">
    <source>
        <dbReference type="HAMAP-Rule" id="MF_01366"/>
    </source>
</evidence>
<evidence type="ECO:0000305" key="2"/>
<comment type="function">
    <text evidence="1">This protein is one of the early assembly proteins of the 50S ribosomal subunit, although it is not seen to bind rRNA by itself. It is important during the early stages of 50S assembly.</text>
</comment>
<comment type="subunit">
    <text evidence="1">Part of the 50S ribosomal subunit.</text>
</comment>
<comment type="similarity">
    <text evidence="1">Belongs to the universal ribosomal protein uL13 family.</text>
</comment>
<reference key="1">
    <citation type="submission" date="2008-02" db="EMBL/GenBank/DDBJ databases">
        <title>Complete sequence of Synechococcus sp. PCC 7002.</title>
        <authorList>
            <person name="Li T."/>
            <person name="Zhao J."/>
            <person name="Zhao C."/>
            <person name="Liu Z."/>
            <person name="Zhao F."/>
            <person name="Marquardt J."/>
            <person name="Nomura C.T."/>
            <person name="Persson S."/>
            <person name="Detter J.C."/>
            <person name="Richardson P.M."/>
            <person name="Lanz C."/>
            <person name="Schuster S.C."/>
            <person name="Wang J."/>
            <person name="Li S."/>
            <person name="Huang X."/>
            <person name="Cai T."/>
            <person name="Yu Z."/>
            <person name="Luo J."/>
            <person name="Zhao J."/>
            <person name="Bryant D.A."/>
        </authorList>
    </citation>
    <scope>NUCLEOTIDE SEQUENCE [LARGE SCALE GENOMIC DNA]</scope>
    <source>
        <strain>ATCC 27264 / PCC 7002 / PR-6</strain>
    </source>
</reference>
<gene>
    <name evidence="1" type="primary">rplM</name>
    <name evidence="1" type="synonym">rpl13</name>
    <name type="ordered locus">SYNPCC7002_A1039</name>
</gene>
<protein>
    <recommendedName>
        <fullName evidence="1">Large ribosomal subunit protein uL13</fullName>
    </recommendedName>
    <alternativeName>
        <fullName evidence="2">50S ribosomal protein L13</fullName>
    </alternativeName>
</protein>
<proteinExistence type="inferred from homology"/>
<name>RL13_PICP2</name>
<dbReference type="EMBL" id="CP000951">
    <property type="protein sequence ID" value="ACA99041.1"/>
    <property type="molecule type" value="Genomic_DNA"/>
</dbReference>
<dbReference type="RefSeq" id="WP_012306665.1">
    <property type="nucleotide sequence ID" value="NZ_JAHHPU010000001.1"/>
</dbReference>
<dbReference type="SMR" id="B1XJI1"/>
<dbReference type="STRING" id="32049.SYNPCC7002_A1039"/>
<dbReference type="KEGG" id="syp:SYNPCC7002_A1039"/>
<dbReference type="eggNOG" id="COG0102">
    <property type="taxonomic scope" value="Bacteria"/>
</dbReference>
<dbReference type="HOGENOM" id="CLU_082184_2_2_3"/>
<dbReference type="Proteomes" id="UP000001688">
    <property type="component" value="Chromosome"/>
</dbReference>
<dbReference type="GO" id="GO:0022625">
    <property type="term" value="C:cytosolic large ribosomal subunit"/>
    <property type="evidence" value="ECO:0007669"/>
    <property type="project" value="TreeGrafter"/>
</dbReference>
<dbReference type="GO" id="GO:0003729">
    <property type="term" value="F:mRNA binding"/>
    <property type="evidence" value="ECO:0007669"/>
    <property type="project" value="TreeGrafter"/>
</dbReference>
<dbReference type="GO" id="GO:0003735">
    <property type="term" value="F:structural constituent of ribosome"/>
    <property type="evidence" value="ECO:0007669"/>
    <property type="project" value="InterPro"/>
</dbReference>
<dbReference type="GO" id="GO:0017148">
    <property type="term" value="P:negative regulation of translation"/>
    <property type="evidence" value="ECO:0007669"/>
    <property type="project" value="TreeGrafter"/>
</dbReference>
<dbReference type="GO" id="GO:0006412">
    <property type="term" value="P:translation"/>
    <property type="evidence" value="ECO:0007669"/>
    <property type="project" value="UniProtKB-UniRule"/>
</dbReference>
<dbReference type="CDD" id="cd00392">
    <property type="entry name" value="Ribosomal_L13"/>
    <property type="match status" value="1"/>
</dbReference>
<dbReference type="FunFam" id="3.90.1180.10:FF:000001">
    <property type="entry name" value="50S ribosomal protein L13"/>
    <property type="match status" value="1"/>
</dbReference>
<dbReference type="Gene3D" id="3.90.1180.10">
    <property type="entry name" value="Ribosomal protein L13"/>
    <property type="match status" value="1"/>
</dbReference>
<dbReference type="HAMAP" id="MF_01366">
    <property type="entry name" value="Ribosomal_uL13"/>
    <property type="match status" value="1"/>
</dbReference>
<dbReference type="InterPro" id="IPR005822">
    <property type="entry name" value="Ribosomal_uL13"/>
</dbReference>
<dbReference type="InterPro" id="IPR005823">
    <property type="entry name" value="Ribosomal_uL13_bac-type"/>
</dbReference>
<dbReference type="InterPro" id="IPR023563">
    <property type="entry name" value="Ribosomal_uL13_CS"/>
</dbReference>
<dbReference type="InterPro" id="IPR036899">
    <property type="entry name" value="Ribosomal_uL13_sf"/>
</dbReference>
<dbReference type="NCBIfam" id="TIGR01066">
    <property type="entry name" value="rplM_bact"/>
    <property type="match status" value="1"/>
</dbReference>
<dbReference type="PANTHER" id="PTHR11545:SF2">
    <property type="entry name" value="LARGE RIBOSOMAL SUBUNIT PROTEIN UL13M"/>
    <property type="match status" value="1"/>
</dbReference>
<dbReference type="PANTHER" id="PTHR11545">
    <property type="entry name" value="RIBOSOMAL PROTEIN L13"/>
    <property type="match status" value="1"/>
</dbReference>
<dbReference type="Pfam" id="PF00572">
    <property type="entry name" value="Ribosomal_L13"/>
    <property type="match status" value="1"/>
</dbReference>
<dbReference type="PIRSF" id="PIRSF002181">
    <property type="entry name" value="Ribosomal_L13"/>
    <property type="match status" value="1"/>
</dbReference>
<dbReference type="SUPFAM" id="SSF52161">
    <property type="entry name" value="Ribosomal protein L13"/>
    <property type="match status" value="1"/>
</dbReference>
<dbReference type="PROSITE" id="PS00783">
    <property type="entry name" value="RIBOSOMAL_L13"/>
    <property type="match status" value="1"/>
</dbReference>
<keyword id="KW-1185">Reference proteome</keyword>
<keyword id="KW-0687">Ribonucleoprotein</keyword>
<keyword id="KW-0689">Ribosomal protein</keyword>
<organism>
    <name type="scientific">Picosynechococcus sp. (strain ATCC 27264 / PCC 7002 / PR-6)</name>
    <name type="common">Agmenellum quadruplicatum</name>
    <dbReference type="NCBI Taxonomy" id="32049"/>
    <lineage>
        <taxon>Bacteria</taxon>
        <taxon>Bacillati</taxon>
        <taxon>Cyanobacteriota</taxon>
        <taxon>Cyanophyceae</taxon>
        <taxon>Oscillatoriophycideae</taxon>
        <taxon>Chroococcales</taxon>
        <taxon>Geminocystaceae</taxon>
        <taxon>Picosynechococcus</taxon>
    </lineage>
</organism>
<feature type="chain" id="PRO_1000144187" description="Large ribosomal subunit protein uL13">
    <location>
        <begin position="1"/>
        <end position="151"/>
    </location>
</feature>
<accession>B1XJI1</accession>
<sequence length="151" mass="16980">MIKTPLPKQETLDQKWYVVDAADQRLGRLASEVAKVLRGKNKAEYTPHMDTGDFVIVVNAEKVVVTGRKPEQKLYRRHSGRPGGMKVETFNQLQDRIPERIIEKAVKGMLPKNALGRRLFTKLKVYAGTEHPHAAQQPEVLTINTIPGGDN</sequence>